<comment type="function">
    <text evidence="1">Catalyzes the last two steps in the biosynthesis of 5-methylaminomethyl-2-thiouridine (mnm(5)s(2)U) at the wobble position (U34) in tRNA. Catalyzes the FAD-dependent demodification of cmnm(5)s(2)U34 to nm(5)s(2)U34, followed by the transfer of a methyl group from S-adenosyl-L-methionine to nm(5)s(2)U34, to form mnm(5)s(2)U34.</text>
</comment>
<comment type="catalytic activity">
    <reaction evidence="1">
        <text>5-aminomethyl-2-thiouridine(34) in tRNA + S-adenosyl-L-methionine = 5-methylaminomethyl-2-thiouridine(34) in tRNA + S-adenosyl-L-homocysteine + H(+)</text>
        <dbReference type="Rhea" id="RHEA:19569"/>
        <dbReference type="Rhea" id="RHEA-COMP:10195"/>
        <dbReference type="Rhea" id="RHEA-COMP:10197"/>
        <dbReference type="ChEBI" id="CHEBI:15378"/>
        <dbReference type="ChEBI" id="CHEBI:57856"/>
        <dbReference type="ChEBI" id="CHEBI:59789"/>
        <dbReference type="ChEBI" id="CHEBI:74454"/>
        <dbReference type="ChEBI" id="CHEBI:74455"/>
        <dbReference type="EC" id="2.1.1.61"/>
    </reaction>
</comment>
<comment type="cofactor">
    <cofactor evidence="1">
        <name>FAD</name>
        <dbReference type="ChEBI" id="CHEBI:57692"/>
    </cofactor>
</comment>
<comment type="subcellular location">
    <subcellularLocation>
        <location evidence="1">Cytoplasm</location>
    </subcellularLocation>
</comment>
<comment type="similarity">
    <text evidence="1">In the N-terminal section; belongs to the methyltransferase superfamily. tRNA (mnm(5)s(2)U34)-methyltransferase family.</text>
</comment>
<comment type="similarity">
    <text evidence="1">In the C-terminal section; belongs to the DAO family.</text>
</comment>
<accession>Q48LF6</accession>
<proteinExistence type="inferred from homology"/>
<protein>
    <recommendedName>
        <fullName evidence="1">tRNA 5-methylaminomethyl-2-thiouridine biosynthesis bifunctional protein MnmC</fullName>
        <shortName evidence="1">tRNA mnm(5)s(2)U biosynthesis bifunctional protein</shortName>
    </recommendedName>
    <domain>
        <recommendedName>
            <fullName evidence="1">tRNA (mnm(5)s(2)U34)-methyltransferase</fullName>
            <ecNumber evidence="1">2.1.1.61</ecNumber>
        </recommendedName>
    </domain>
    <domain>
        <recommendedName>
            <fullName evidence="1">FAD-dependent cmnm(5)s(2)U34 oxidoreductase</fullName>
            <ecNumber evidence="1">1.5.-.-</ecNumber>
        </recommendedName>
    </domain>
</protein>
<keyword id="KW-0963">Cytoplasm</keyword>
<keyword id="KW-0274">FAD</keyword>
<keyword id="KW-0285">Flavoprotein</keyword>
<keyword id="KW-0489">Methyltransferase</keyword>
<keyword id="KW-0511">Multifunctional enzyme</keyword>
<keyword id="KW-0560">Oxidoreductase</keyword>
<keyword id="KW-0949">S-adenosyl-L-methionine</keyword>
<keyword id="KW-0808">Transferase</keyword>
<keyword id="KW-0819">tRNA processing</keyword>
<name>MNMC_PSE14</name>
<gene>
    <name evidence="1" type="primary">mnmC</name>
    <name type="ordered locus">PSPPH_1514</name>
</gene>
<dbReference type="EC" id="2.1.1.61" evidence="1"/>
<dbReference type="EC" id="1.5.-.-" evidence="1"/>
<dbReference type="EMBL" id="CP000058">
    <property type="protein sequence ID" value="AAZ36035.1"/>
    <property type="molecule type" value="Genomic_DNA"/>
</dbReference>
<dbReference type="RefSeq" id="WP_011168090.1">
    <property type="nucleotide sequence ID" value="NC_005773.3"/>
</dbReference>
<dbReference type="SMR" id="Q48LF6"/>
<dbReference type="KEGG" id="psp:PSPPH_1514"/>
<dbReference type="eggNOG" id="COG0665">
    <property type="taxonomic scope" value="Bacteria"/>
</dbReference>
<dbReference type="eggNOG" id="COG4121">
    <property type="taxonomic scope" value="Bacteria"/>
</dbReference>
<dbReference type="HOGENOM" id="CLU_022427_1_0_6"/>
<dbReference type="Proteomes" id="UP000000551">
    <property type="component" value="Chromosome"/>
</dbReference>
<dbReference type="GO" id="GO:0005737">
    <property type="term" value="C:cytoplasm"/>
    <property type="evidence" value="ECO:0007669"/>
    <property type="project" value="UniProtKB-SubCell"/>
</dbReference>
<dbReference type="GO" id="GO:0050660">
    <property type="term" value="F:flavin adenine dinucleotide binding"/>
    <property type="evidence" value="ECO:0007669"/>
    <property type="project" value="UniProtKB-UniRule"/>
</dbReference>
<dbReference type="GO" id="GO:0016645">
    <property type="term" value="F:oxidoreductase activity, acting on the CH-NH group of donors"/>
    <property type="evidence" value="ECO:0007669"/>
    <property type="project" value="InterPro"/>
</dbReference>
<dbReference type="GO" id="GO:0004808">
    <property type="term" value="F:tRNA (5-methylaminomethyl-2-thiouridylate)(34)-methyltransferase activity"/>
    <property type="evidence" value="ECO:0007669"/>
    <property type="project" value="UniProtKB-EC"/>
</dbReference>
<dbReference type="GO" id="GO:0032259">
    <property type="term" value="P:methylation"/>
    <property type="evidence" value="ECO:0007669"/>
    <property type="project" value="UniProtKB-KW"/>
</dbReference>
<dbReference type="GO" id="GO:0002098">
    <property type="term" value="P:tRNA wobble uridine modification"/>
    <property type="evidence" value="ECO:0007669"/>
    <property type="project" value="TreeGrafter"/>
</dbReference>
<dbReference type="Gene3D" id="3.30.9.10">
    <property type="entry name" value="D-Amino Acid Oxidase, subunit A, domain 2"/>
    <property type="match status" value="1"/>
</dbReference>
<dbReference type="Gene3D" id="3.50.50.60">
    <property type="entry name" value="FAD/NAD(P)-binding domain"/>
    <property type="match status" value="1"/>
</dbReference>
<dbReference type="Gene3D" id="3.40.50.150">
    <property type="entry name" value="Vaccinia Virus protein VP39"/>
    <property type="match status" value="1"/>
</dbReference>
<dbReference type="HAMAP" id="MF_01102">
    <property type="entry name" value="MnmC"/>
    <property type="match status" value="1"/>
</dbReference>
<dbReference type="InterPro" id="IPR006076">
    <property type="entry name" value="FAD-dep_OxRdtase"/>
</dbReference>
<dbReference type="InterPro" id="IPR036188">
    <property type="entry name" value="FAD/NAD-bd_sf"/>
</dbReference>
<dbReference type="InterPro" id="IPR008471">
    <property type="entry name" value="MnmC-like_methylTransf"/>
</dbReference>
<dbReference type="InterPro" id="IPR029063">
    <property type="entry name" value="SAM-dependent_MTases_sf"/>
</dbReference>
<dbReference type="InterPro" id="IPR023032">
    <property type="entry name" value="tRNA_MAMT_biosynth_bifunc_MnmC"/>
</dbReference>
<dbReference type="InterPro" id="IPR047785">
    <property type="entry name" value="tRNA_MNMC2"/>
</dbReference>
<dbReference type="InterPro" id="IPR017610">
    <property type="entry name" value="tRNA_S-uridine_synth_MnmC_C"/>
</dbReference>
<dbReference type="NCBIfam" id="TIGR03197">
    <property type="entry name" value="MnmC_Cterm"/>
    <property type="match status" value="1"/>
</dbReference>
<dbReference type="NCBIfam" id="NF002481">
    <property type="entry name" value="PRK01747.1-2"/>
    <property type="match status" value="1"/>
</dbReference>
<dbReference type="NCBIfam" id="NF033855">
    <property type="entry name" value="tRNA_MNMC2"/>
    <property type="match status" value="1"/>
</dbReference>
<dbReference type="PANTHER" id="PTHR13847">
    <property type="entry name" value="SARCOSINE DEHYDROGENASE-RELATED"/>
    <property type="match status" value="1"/>
</dbReference>
<dbReference type="PANTHER" id="PTHR13847:SF283">
    <property type="entry name" value="TRNA 5-METHYLAMINOMETHYL-2-THIOURIDINE BIOSYNTHESIS BIFUNCTIONAL PROTEIN MNMC"/>
    <property type="match status" value="1"/>
</dbReference>
<dbReference type="Pfam" id="PF01266">
    <property type="entry name" value="DAO"/>
    <property type="match status" value="1"/>
</dbReference>
<dbReference type="Pfam" id="PF05430">
    <property type="entry name" value="Methyltransf_30"/>
    <property type="match status" value="1"/>
</dbReference>
<dbReference type="SUPFAM" id="SSF51905">
    <property type="entry name" value="FAD/NAD(P)-binding domain"/>
    <property type="match status" value="1"/>
</dbReference>
<dbReference type="SUPFAM" id="SSF53335">
    <property type="entry name" value="S-adenosyl-L-methionine-dependent methyltransferases"/>
    <property type="match status" value="1"/>
</dbReference>
<organism>
    <name type="scientific">Pseudomonas savastanoi pv. phaseolicola (strain 1448A / Race 6)</name>
    <name type="common">Pseudomonas syringae pv. phaseolicola (strain 1448A / Race 6)</name>
    <dbReference type="NCBI Taxonomy" id="264730"/>
    <lineage>
        <taxon>Bacteria</taxon>
        <taxon>Pseudomonadati</taxon>
        <taxon>Pseudomonadota</taxon>
        <taxon>Gammaproteobacteria</taxon>
        <taxon>Pseudomonadales</taxon>
        <taxon>Pseudomonadaceae</taxon>
        <taxon>Pseudomonas</taxon>
    </lineage>
</organism>
<evidence type="ECO:0000255" key="1">
    <source>
        <dbReference type="HAMAP-Rule" id="MF_01102"/>
    </source>
</evidence>
<feature type="chain" id="PRO_1000065001" description="tRNA 5-methylaminomethyl-2-thiouridine biosynthesis bifunctional protein MnmC">
    <location>
        <begin position="1"/>
        <end position="660"/>
    </location>
</feature>
<feature type="region of interest" description="tRNA (mnm(5)s(2)U34)-methyltransferase">
    <location>
        <begin position="1"/>
        <end position="235"/>
    </location>
</feature>
<feature type="region of interest" description="FAD-dependent cmnm(5)s(2)U34 oxidoreductase">
    <location>
        <begin position="266"/>
        <end position="660"/>
    </location>
</feature>
<reference key="1">
    <citation type="journal article" date="2005" name="J. Bacteriol.">
        <title>Whole-genome sequence analysis of Pseudomonas syringae pv. phaseolicola 1448A reveals divergence among pathovars in genes involved in virulence and transposition.</title>
        <authorList>
            <person name="Joardar V."/>
            <person name="Lindeberg M."/>
            <person name="Jackson R.W."/>
            <person name="Selengut J."/>
            <person name="Dodson R."/>
            <person name="Brinkac L.M."/>
            <person name="Daugherty S.C."/>
            <person name="DeBoy R.T."/>
            <person name="Durkin A.S."/>
            <person name="Gwinn Giglio M."/>
            <person name="Madupu R."/>
            <person name="Nelson W.C."/>
            <person name="Rosovitz M.J."/>
            <person name="Sullivan S.A."/>
            <person name="Crabtree J."/>
            <person name="Creasy T."/>
            <person name="Davidsen T.M."/>
            <person name="Haft D.H."/>
            <person name="Zafar N."/>
            <person name="Zhou L."/>
            <person name="Halpin R."/>
            <person name="Holley T."/>
            <person name="Khouri H.M."/>
            <person name="Feldblyum T.V."/>
            <person name="White O."/>
            <person name="Fraser C.M."/>
            <person name="Chatterjee A.K."/>
            <person name="Cartinhour S."/>
            <person name="Schneider D."/>
            <person name="Mansfield J.W."/>
            <person name="Collmer A."/>
            <person name="Buell R."/>
        </authorList>
    </citation>
    <scope>NUCLEOTIDE SEQUENCE [LARGE SCALE GENOMIC DNA]</scope>
    <source>
        <strain>1448A / Race 6</strain>
    </source>
</reference>
<sequence length="660" mass="72273">MTITRHARIDWDEQGNPRSRDFSDVYFSTESGLDETRHVFLVQNDLRRRFSELPEDGRLIIGETGFGTGLNFLCAWQLFDECAPAEARLQFVSVEKYPLSRADLQRALALWPELSRFARQLLDQYVAVHEGFQRLAFDDGRVTLTLLIGDALQMLPQLDGQIDAWFLDGFAPAKNPEMWTPELFAELARLSAPSATIGTFTSTGWVRRSLNAAGFKMKRVPGIGHKWEVLRGTFIAWPEDVAHPPAAKPWFARPAPIGGERKALVIGAGLAGCATAQSLAQRGWQVSLLERHAAPAQEASGNPQGVLYLKLSAHGTALSQLILSGFGHTRRLLERLQRGVDWDACGVLQLTFDDKEAQRQKQLADAFPESLLHLLDQPAAEAQSGVALNSGGLFYPEGGWVHPPALCHAQAAHANIRLIAHQQALELRRVDDQWQVWSDEQLIDSAPVVVLAGAADIQKFSQSADLPLKRIRGQITRLPQTQASAALRSVVCAEGYVAPARLGEHTLGASFDFNSTDLTPNLADHLGNLGLLREISEDLTSRLDTADLSPEQLQGRAAFRCTSPDYLPIVGPLADREAFLQAYAALGKDARQVPNIACPWLDGLYVNSGHGSRGLITAPLCGELIAAWVDNEPLPLPRSVAEACHPNRFALRGLIRGGGK</sequence>